<name>DIC_MOUSE</name>
<feature type="chain" id="PRO_0000090610" description="Mitochondrial dicarboxylate carrier">
    <location>
        <begin position="1"/>
        <end position="287"/>
    </location>
</feature>
<feature type="transmembrane region" description="Helical; Name=1" evidence="2">
    <location>
        <begin position="9"/>
        <end position="29"/>
    </location>
</feature>
<feature type="transmembrane region" description="Helical; Name=2" evidence="2">
    <location>
        <begin position="62"/>
        <end position="81"/>
    </location>
</feature>
<feature type="transmembrane region" description="Helical; Name=3" evidence="2">
    <location>
        <begin position="102"/>
        <end position="122"/>
    </location>
</feature>
<feature type="transmembrane region" description="Helical; Name=4" evidence="2">
    <location>
        <begin position="162"/>
        <end position="181"/>
    </location>
</feature>
<feature type="transmembrane region" description="Helical; Name=5" evidence="2">
    <location>
        <begin position="202"/>
        <end position="222"/>
    </location>
</feature>
<feature type="transmembrane region" description="Helical; Name=6" evidence="2">
    <location>
        <begin position="254"/>
        <end position="274"/>
    </location>
</feature>
<feature type="repeat" description="Solcar 1">
    <location>
        <begin position="7"/>
        <end position="87"/>
    </location>
</feature>
<feature type="repeat" description="Solcar 2">
    <location>
        <begin position="100"/>
        <end position="187"/>
    </location>
</feature>
<feature type="repeat" description="Solcar 3">
    <location>
        <begin position="196"/>
        <end position="279"/>
    </location>
</feature>
<feature type="modified residue" description="N6-acetyllysine" evidence="12">
    <location>
        <position position="158"/>
    </location>
</feature>
<feature type="sequence conflict" description="In Ref. 1; AAF03412." evidence="10" ref="1">
    <original>A</original>
    <variation>T</variation>
    <location>
        <position position="6"/>
    </location>
</feature>
<feature type="sequence conflict" description="In Ref. 1; AAF03412." evidence="10" ref="1">
    <original>M</original>
    <variation>L</variation>
    <location>
        <position position="46"/>
    </location>
</feature>
<feature type="sequence conflict" description="In Ref. 2; BAB25425." evidence="10" ref="2">
    <original>F</original>
    <variation>L</variation>
    <location>
        <position position="78"/>
    </location>
</feature>
<accession>Q9QZD8</accession>
<accession>Q543J6</accession>
<accession>Q99LJ9</accession>
<accession>Q9D8G8</accession>
<comment type="function">
    <text evidence="4 5 6">Catalyzes the electroneutral exchange or flux of physiologically important metabolites such as dicarboxylates (malonate, malate, succinate), inorganic sulfur-containing anions, and phosphate, across mitochondrial inner membrane (PubMed:33746082). Plays an important role in gluconeogenesis, fatty acid metabolism, urea synthesis, and sulfur metabolism, particularly in liver, by supplying the substrates for the different metabolic processes (PubMed:16027120, PubMed:30943427, PubMed:33746082). Regulates fatty acid release from adipocytes, and contributes to systemic insulin sensitivity (PubMed:33746082).</text>
</comment>
<comment type="catalytic activity">
    <reaction evidence="1">
        <text>(S)-malate(in) + phosphate(out) = (S)-malate(out) + phosphate(in)</text>
        <dbReference type="Rhea" id="RHEA:71607"/>
        <dbReference type="ChEBI" id="CHEBI:15589"/>
        <dbReference type="ChEBI" id="CHEBI:43474"/>
    </reaction>
</comment>
<comment type="catalytic activity">
    <reaction evidence="1">
        <text>malonate(out) + (S)-malate(in) = malonate(in) + (S)-malate(out)</text>
        <dbReference type="Rhea" id="RHEA:71611"/>
        <dbReference type="ChEBI" id="CHEBI:15589"/>
        <dbReference type="ChEBI" id="CHEBI:15792"/>
    </reaction>
</comment>
<comment type="catalytic activity">
    <reaction evidence="1">
        <text>(S)-malate(in) + succinate(out) = (S)-malate(out) + succinate(in)</text>
        <dbReference type="Rhea" id="RHEA:29327"/>
        <dbReference type="ChEBI" id="CHEBI:15589"/>
        <dbReference type="ChEBI" id="CHEBI:30031"/>
    </reaction>
</comment>
<comment type="catalytic activity">
    <reaction evidence="1">
        <text>(S)-malate(in) + sulfate(out) = (S)-malate(out) + sulfate(in)</text>
        <dbReference type="Rhea" id="RHEA:71615"/>
        <dbReference type="ChEBI" id="CHEBI:15589"/>
        <dbReference type="ChEBI" id="CHEBI:16189"/>
    </reaction>
</comment>
<comment type="catalytic activity">
    <reaction evidence="1">
        <text>malonate(out) + phosphate(in) = malonate(in) + phosphate(out)</text>
        <dbReference type="Rhea" id="RHEA:71623"/>
        <dbReference type="ChEBI" id="CHEBI:15792"/>
        <dbReference type="ChEBI" id="CHEBI:43474"/>
    </reaction>
</comment>
<comment type="catalytic activity">
    <reaction evidence="1">
        <text>succinate(out) + phosphate(in) = succinate(in) + phosphate(out)</text>
        <dbReference type="Rhea" id="RHEA:71627"/>
        <dbReference type="ChEBI" id="CHEBI:30031"/>
        <dbReference type="ChEBI" id="CHEBI:43474"/>
    </reaction>
</comment>
<comment type="catalytic activity">
    <reaction evidence="1">
        <text>sulfate(out) + phosphate(in) = sulfate(in) + phosphate(out)</text>
        <dbReference type="Rhea" id="RHEA:71631"/>
        <dbReference type="ChEBI" id="CHEBI:16189"/>
        <dbReference type="ChEBI" id="CHEBI:43474"/>
    </reaction>
</comment>
<comment type="catalytic activity">
    <reaction evidence="6">
        <text>malonate(out) + succinate(in) = malonate(in) + succinate(out)</text>
        <dbReference type="Rhea" id="RHEA:71667"/>
        <dbReference type="ChEBI" id="CHEBI:15792"/>
        <dbReference type="ChEBI" id="CHEBI:30031"/>
    </reaction>
</comment>
<comment type="activity regulation">
    <text evidence="5">Regulated by circadian protein CLOCK (Circadian Locomotor Output Cycles Kaput).</text>
</comment>
<comment type="subcellular location">
    <subcellularLocation>
        <location evidence="11">Mitochondrion inner membrane</location>
        <topology>Multi-pass membrane protein</topology>
    </subcellularLocation>
</comment>
<comment type="tissue specificity">
    <text evidence="3 6">Expressed at very high levels in white adipose tissue (PubMed:10567211, PubMed:33746082). And at low levels in brown adipose tissue, kidney and liver (PubMed:10567211).</text>
</comment>
<comment type="similarity">
    <text evidence="10">Belongs to the mitochondrial carrier (TC 2.A.29) family.</text>
</comment>
<keyword id="KW-0007">Acetylation</keyword>
<keyword id="KW-0050">Antiport</keyword>
<keyword id="KW-0445">Lipid transport</keyword>
<keyword id="KW-0472">Membrane</keyword>
<keyword id="KW-0496">Mitochondrion</keyword>
<keyword id="KW-0999">Mitochondrion inner membrane</keyword>
<keyword id="KW-1185">Reference proteome</keyword>
<keyword id="KW-0677">Repeat</keyword>
<keyword id="KW-0812">Transmembrane</keyword>
<keyword id="KW-1133">Transmembrane helix</keyword>
<keyword id="KW-0813">Transport</keyword>
<dbReference type="EMBL" id="AF188712">
    <property type="protein sequence ID" value="AAF03412.1"/>
    <property type="molecule type" value="mRNA"/>
</dbReference>
<dbReference type="EMBL" id="AK008038">
    <property type="protein sequence ID" value="BAB25425.1"/>
    <property type="molecule type" value="mRNA"/>
</dbReference>
<dbReference type="EMBL" id="AK050282">
    <property type="protein sequence ID" value="BAC34165.1"/>
    <property type="molecule type" value="mRNA"/>
</dbReference>
<dbReference type="EMBL" id="AK151645">
    <property type="protein sequence ID" value="BAE30575.1"/>
    <property type="molecule type" value="mRNA"/>
</dbReference>
<dbReference type="EMBL" id="BC003222">
    <property type="protein sequence ID" value="AAH03222.1"/>
    <property type="molecule type" value="mRNA"/>
</dbReference>
<dbReference type="CCDS" id="CCDS25738.1"/>
<dbReference type="RefSeq" id="NP_038798.2">
    <property type="nucleotide sequence ID" value="NM_013770.2"/>
</dbReference>
<dbReference type="SMR" id="Q9QZD8"/>
<dbReference type="BioGRID" id="205183">
    <property type="interactions" value="11"/>
</dbReference>
<dbReference type="FunCoup" id="Q9QZD8">
    <property type="interactions" value="1333"/>
</dbReference>
<dbReference type="IntAct" id="Q9QZD8">
    <property type="interactions" value="1"/>
</dbReference>
<dbReference type="STRING" id="10090.ENSMUSP00000026899"/>
<dbReference type="GlyGen" id="Q9QZD8">
    <property type="glycosylation" value="1 site, 1 O-linked glycan (1 site)"/>
</dbReference>
<dbReference type="iPTMnet" id="Q9QZD8"/>
<dbReference type="PhosphoSitePlus" id="Q9QZD8"/>
<dbReference type="SwissPalm" id="Q9QZD8"/>
<dbReference type="jPOST" id="Q9QZD8"/>
<dbReference type="PaxDb" id="10090-ENSMUSP00000026899"/>
<dbReference type="PeptideAtlas" id="Q9QZD8"/>
<dbReference type="ProteomicsDB" id="279867"/>
<dbReference type="Pumba" id="Q9QZD8"/>
<dbReference type="Antibodypedia" id="81616">
    <property type="antibodies" value="1 antibodies from 1 providers"/>
</dbReference>
<dbReference type="DNASU" id="27376"/>
<dbReference type="Ensembl" id="ENSMUST00000026899.4">
    <property type="protein sequence ID" value="ENSMUSP00000026899.4"/>
    <property type="gene ID" value="ENSMUSG00000025792.10"/>
</dbReference>
<dbReference type="GeneID" id="27376"/>
<dbReference type="KEGG" id="mmu:27376"/>
<dbReference type="UCSC" id="uc007mtb.2">
    <property type="organism name" value="mouse"/>
</dbReference>
<dbReference type="AGR" id="MGI:1353497"/>
<dbReference type="CTD" id="1468"/>
<dbReference type="MGI" id="MGI:1353497">
    <property type="gene designation" value="Slc25a10"/>
</dbReference>
<dbReference type="VEuPathDB" id="HostDB:ENSMUSG00000025792"/>
<dbReference type="eggNOG" id="KOG0759">
    <property type="taxonomic scope" value="Eukaryota"/>
</dbReference>
<dbReference type="GeneTree" id="ENSGT00940000156783"/>
<dbReference type="HOGENOM" id="CLU_015166_14_1_1"/>
<dbReference type="InParanoid" id="Q9QZD8"/>
<dbReference type="OMA" id="TTRFGAY"/>
<dbReference type="OrthoDB" id="448427at2759"/>
<dbReference type="PhylomeDB" id="Q9QZD8"/>
<dbReference type="TreeFam" id="TF312920"/>
<dbReference type="Reactome" id="R-MMU-1614517">
    <property type="pathway name" value="Sulfide oxidation to sulfate"/>
</dbReference>
<dbReference type="Reactome" id="R-MMU-428643">
    <property type="pathway name" value="Organic anion transporters"/>
</dbReference>
<dbReference type="BioGRID-ORCS" id="27376">
    <property type="hits" value="4 hits in 79 CRISPR screens"/>
</dbReference>
<dbReference type="ChiTaRS" id="Slc25a10">
    <property type="organism name" value="mouse"/>
</dbReference>
<dbReference type="PRO" id="PR:Q9QZD8"/>
<dbReference type="Proteomes" id="UP000000589">
    <property type="component" value="Chromosome 11"/>
</dbReference>
<dbReference type="RNAct" id="Q9QZD8">
    <property type="molecule type" value="protein"/>
</dbReference>
<dbReference type="Bgee" id="ENSMUSG00000025792">
    <property type="expression patterns" value="Expressed in right kidney and 253 other cell types or tissues"/>
</dbReference>
<dbReference type="GO" id="GO:0005743">
    <property type="term" value="C:mitochondrial inner membrane"/>
    <property type="evidence" value="ECO:0000314"/>
    <property type="project" value="MGI"/>
</dbReference>
<dbReference type="GO" id="GO:0005739">
    <property type="term" value="C:mitochondrion"/>
    <property type="evidence" value="ECO:0000314"/>
    <property type="project" value="MGI"/>
</dbReference>
<dbReference type="GO" id="GO:0005654">
    <property type="term" value="C:nucleoplasm"/>
    <property type="evidence" value="ECO:0007669"/>
    <property type="project" value="Ensembl"/>
</dbReference>
<dbReference type="GO" id="GO:0015297">
    <property type="term" value="F:antiporter activity"/>
    <property type="evidence" value="ECO:0007669"/>
    <property type="project" value="UniProtKB-KW"/>
</dbReference>
<dbReference type="GO" id="GO:0015140">
    <property type="term" value="F:malate transmembrane transporter activity"/>
    <property type="evidence" value="ECO:0000315"/>
    <property type="project" value="MGI"/>
</dbReference>
<dbReference type="GO" id="GO:0015291">
    <property type="term" value="F:secondary active transmembrane transporter activity"/>
    <property type="evidence" value="ECO:0000314"/>
    <property type="project" value="MGI"/>
</dbReference>
<dbReference type="GO" id="GO:0006094">
    <property type="term" value="P:gluconeogenesis"/>
    <property type="evidence" value="ECO:0000266"/>
    <property type="project" value="MGI"/>
</dbReference>
<dbReference type="GO" id="GO:0046166">
    <property type="term" value="P:glyceraldehyde-3-phosphate biosynthetic process"/>
    <property type="evidence" value="ECO:0000315"/>
    <property type="project" value="MGI"/>
</dbReference>
<dbReference type="GO" id="GO:0006869">
    <property type="term" value="P:lipid transport"/>
    <property type="evidence" value="ECO:0007669"/>
    <property type="project" value="UniProtKB-KW"/>
</dbReference>
<dbReference type="GO" id="GO:0006839">
    <property type="term" value="P:mitochondrial transport"/>
    <property type="evidence" value="ECO:0000266"/>
    <property type="project" value="MGI"/>
</dbReference>
<dbReference type="FunFam" id="1.50.40.10:FF:000043">
    <property type="entry name" value="mitochondrial dicarboxylate carrier isoform X2"/>
    <property type="match status" value="1"/>
</dbReference>
<dbReference type="Gene3D" id="1.50.40.10">
    <property type="entry name" value="Mitochondrial carrier domain"/>
    <property type="match status" value="1"/>
</dbReference>
<dbReference type="InterPro" id="IPR002067">
    <property type="entry name" value="Mit_carrier"/>
</dbReference>
<dbReference type="InterPro" id="IPR050391">
    <property type="entry name" value="Mito_Metabolite_Transporter"/>
</dbReference>
<dbReference type="InterPro" id="IPR018108">
    <property type="entry name" value="Mitochondrial_sb/sol_carrier"/>
</dbReference>
<dbReference type="InterPro" id="IPR023395">
    <property type="entry name" value="Mt_carrier_dom_sf"/>
</dbReference>
<dbReference type="PANTHER" id="PTHR45618">
    <property type="entry name" value="MITOCHONDRIAL DICARBOXYLATE CARRIER-RELATED"/>
    <property type="match status" value="1"/>
</dbReference>
<dbReference type="Pfam" id="PF00153">
    <property type="entry name" value="Mito_carr"/>
    <property type="match status" value="3"/>
</dbReference>
<dbReference type="PRINTS" id="PR00784">
    <property type="entry name" value="MTUNCOUPLING"/>
</dbReference>
<dbReference type="SUPFAM" id="SSF103506">
    <property type="entry name" value="Mitochondrial carrier"/>
    <property type="match status" value="1"/>
</dbReference>
<dbReference type="PROSITE" id="PS50920">
    <property type="entry name" value="SOLCAR"/>
    <property type="match status" value="3"/>
</dbReference>
<gene>
    <name evidence="8 9" type="primary">Slc25a10</name>
    <name type="synonym">Dic</name>
</gene>
<proteinExistence type="evidence at protein level"/>
<evidence type="ECO:0000250" key="1">
    <source>
        <dbReference type="UniProtKB" id="O89035"/>
    </source>
</evidence>
<evidence type="ECO:0000255" key="2"/>
<evidence type="ECO:0000269" key="3">
    <source>
    </source>
</evidence>
<evidence type="ECO:0000269" key="4">
    <source>
    </source>
</evidence>
<evidence type="ECO:0000269" key="5">
    <source>
    </source>
</evidence>
<evidence type="ECO:0000269" key="6">
    <source>
    </source>
</evidence>
<evidence type="ECO:0000303" key="7">
    <source>
    </source>
</evidence>
<evidence type="ECO:0000303" key="8">
    <source>
    </source>
</evidence>
<evidence type="ECO:0000303" key="9">
    <source>
    </source>
</evidence>
<evidence type="ECO:0000305" key="10"/>
<evidence type="ECO:0000305" key="11">
    <source>
    </source>
</evidence>
<evidence type="ECO:0007744" key="12">
    <source>
    </source>
</evidence>
<organism>
    <name type="scientific">Mus musculus</name>
    <name type="common">Mouse</name>
    <dbReference type="NCBI Taxonomy" id="10090"/>
    <lineage>
        <taxon>Eukaryota</taxon>
        <taxon>Metazoa</taxon>
        <taxon>Chordata</taxon>
        <taxon>Craniata</taxon>
        <taxon>Vertebrata</taxon>
        <taxon>Euteleostomi</taxon>
        <taxon>Mammalia</taxon>
        <taxon>Eutheria</taxon>
        <taxon>Euarchontoglires</taxon>
        <taxon>Glires</taxon>
        <taxon>Rodentia</taxon>
        <taxon>Myomorpha</taxon>
        <taxon>Muroidea</taxon>
        <taxon>Muridae</taxon>
        <taxon>Murinae</taxon>
        <taxon>Mus</taxon>
        <taxon>Mus</taxon>
    </lineage>
</organism>
<reference key="1">
    <citation type="journal article" date="1999" name="Biochem. J.">
        <title>Predominant expression of the mitochondrial dicarboxylate carrier in white adipose tissue.</title>
        <authorList>
            <person name="Das K."/>
            <person name="Lewis R.Y."/>
            <person name="Combatsiaris T.P."/>
            <person name="Lin Y."/>
            <person name="Shapiro L."/>
            <person name="Charron M.J."/>
            <person name="Scherer P.E."/>
        </authorList>
    </citation>
    <scope>NUCLEOTIDE SEQUENCE [MRNA]</scope>
    <scope>SUBCELLULAR LOCATION</scope>
    <scope>TISSUE SPECIFICITY</scope>
</reference>
<reference key="2">
    <citation type="journal article" date="2005" name="Science">
        <title>The transcriptional landscape of the mammalian genome.</title>
        <authorList>
            <person name="Carninci P."/>
            <person name="Kasukawa T."/>
            <person name="Katayama S."/>
            <person name="Gough J."/>
            <person name="Frith M.C."/>
            <person name="Maeda N."/>
            <person name="Oyama R."/>
            <person name="Ravasi T."/>
            <person name="Lenhard B."/>
            <person name="Wells C."/>
            <person name="Kodzius R."/>
            <person name="Shimokawa K."/>
            <person name="Bajic V.B."/>
            <person name="Brenner S.E."/>
            <person name="Batalov S."/>
            <person name="Forrest A.R."/>
            <person name="Zavolan M."/>
            <person name="Davis M.J."/>
            <person name="Wilming L.G."/>
            <person name="Aidinis V."/>
            <person name="Allen J.E."/>
            <person name="Ambesi-Impiombato A."/>
            <person name="Apweiler R."/>
            <person name="Aturaliya R.N."/>
            <person name="Bailey T.L."/>
            <person name="Bansal M."/>
            <person name="Baxter L."/>
            <person name="Beisel K.W."/>
            <person name="Bersano T."/>
            <person name="Bono H."/>
            <person name="Chalk A.M."/>
            <person name="Chiu K.P."/>
            <person name="Choudhary V."/>
            <person name="Christoffels A."/>
            <person name="Clutterbuck D.R."/>
            <person name="Crowe M.L."/>
            <person name="Dalla E."/>
            <person name="Dalrymple B.P."/>
            <person name="de Bono B."/>
            <person name="Della Gatta G."/>
            <person name="di Bernardo D."/>
            <person name="Down T."/>
            <person name="Engstrom P."/>
            <person name="Fagiolini M."/>
            <person name="Faulkner G."/>
            <person name="Fletcher C.F."/>
            <person name="Fukushima T."/>
            <person name="Furuno M."/>
            <person name="Futaki S."/>
            <person name="Gariboldi M."/>
            <person name="Georgii-Hemming P."/>
            <person name="Gingeras T.R."/>
            <person name="Gojobori T."/>
            <person name="Green R.E."/>
            <person name="Gustincich S."/>
            <person name="Harbers M."/>
            <person name="Hayashi Y."/>
            <person name="Hensch T.K."/>
            <person name="Hirokawa N."/>
            <person name="Hill D."/>
            <person name="Huminiecki L."/>
            <person name="Iacono M."/>
            <person name="Ikeo K."/>
            <person name="Iwama A."/>
            <person name="Ishikawa T."/>
            <person name="Jakt M."/>
            <person name="Kanapin A."/>
            <person name="Katoh M."/>
            <person name="Kawasawa Y."/>
            <person name="Kelso J."/>
            <person name="Kitamura H."/>
            <person name="Kitano H."/>
            <person name="Kollias G."/>
            <person name="Krishnan S.P."/>
            <person name="Kruger A."/>
            <person name="Kummerfeld S.K."/>
            <person name="Kurochkin I.V."/>
            <person name="Lareau L.F."/>
            <person name="Lazarevic D."/>
            <person name="Lipovich L."/>
            <person name="Liu J."/>
            <person name="Liuni S."/>
            <person name="McWilliam S."/>
            <person name="Madan Babu M."/>
            <person name="Madera M."/>
            <person name="Marchionni L."/>
            <person name="Matsuda H."/>
            <person name="Matsuzawa S."/>
            <person name="Miki H."/>
            <person name="Mignone F."/>
            <person name="Miyake S."/>
            <person name="Morris K."/>
            <person name="Mottagui-Tabar S."/>
            <person name="Mulder N."/>
            <person name="Nakano N."/>
            <person name="Nakauchi H."/>
            <person name="Ng P."/>
            <person name="Nilsson R."/>
            <person name="Nishiguchi S."/>
            <person name="Nishikawa S."/>
            <person name="Nori F."/>
            <person name="Ohara O."/>
            <person name="Okazaki Y."/>
            <person name="Orlando V."/>
            <person name="Pang K.C."/>
            <person name="Pavan W.J."/>
            <person name="Pavesi G."/>
            <person name="Pesole G."/>
            <person name="Petrovsky N."/>
            <person name="Piazza S."/>
            <person name="Reed J."/>
            <person name="Reid J.F."/>
            <person name="Ring B.Z."/>
            <person name="Ringwald M."/>
            <person name="Rost B."/>
            <person name="Ruan Y."/>
            <person name="Salzberg S.L."/>
            <person name="Sandelin A."/>
            <person name="Schneider C."/>
            <person name="Schoenbach C."/>
            <person name="Sekiguchi K."/>
            <person name="Semple C.A."/>
            <person name="Seno S."/>
            <person name="Sessa L."/>
            <person name="Sheng Y."/>
            <person name="Shibata Y."/>
            <person name="Shimada H."/>
            <person name="Shimada K."/>
            <person name="Silva D."/>
            <person name="Sinclair B."/>
            <person name="Sperling S."/>
            <person name="Stupka E."/>
            <person name="Sugiura K."/>
            <person name="Sultana R."/>
            <person name="Takenaka Y."/>
            <person name="Taki K."/>
            <person name="Tammoja K."/>
            <person name="Tan S.L."/>
            <person name="Tang S."/>
            <person name="Taylor M.S."/>
            <person name="Tegner J."/>
            <person name="Teichmann S.A."/>
            <person name="Ueda H.R."/>
            <person name="van Nimwegen E."/>
            <person name="Verardo R."/>
            <person name="Wei C.L."/>
            <person name="Yagi K."/>
            <person name="Yamanishi H."/>
            <person name="Zabarovsky E."/>
            <person name="Zhu S."/>
            <person name="Zimmer A."/>
            <person name="Hide W."/>
            <person name="Bult C."/>
            <person name="Grimmond S.M."/>
            <person name="Teasdale R.D."/>
            <person name="Liu E.T."/>
            <person name="Brusic V."/>
            <person name="Quackenbush J."/>
            <person name="Wahlestedt C."/>
            <person name="Mattick J.S."/>
            <person name="Hume D.A."/>
            <person name="Kai C."/>
            <person name="Sasaki D."/>
            <person name="Tomaru Y."/>
            <person name="Fukuda S."/>
            <person name="Kanamori-Katayama M."/>
            <person name="Suzuki M."/>
            <person name="Aoki J."/>
            <person name="Arakawa T."/>
            <person name="Iida J."/>
            <person name="Imamura K."/>
            <person name="Itoh M."/>
            <person name="Kato T."/>
            <person name="Kawaji H."/>
            <person name="Kawagashira N."/>
            <person name="Kawashima T."/>
            <person name="Kojima M."/>
            <person name="Kondo S."/>
            <person name="Konno H."/>
            <person name="Nakano K."/>
            <person name="Ninomiya N."/>
            <person name="Nishio T."/>
            <person name="Okada M."/>
            <person name="Plessy C."/>
            <person name="Shibata K."/>
            <person name="Shiraki T."/>
            <person name="Suzuki S."/>
            <person name="Tagami M."/>
            <person name="Waki K."/>
            <person name="Watahiki A."/>
            <person name="Okamura-Oho Y."/>
            <person name="Suzuki H."/>
            <person name="Kawai J."/>
            <person name="Hayashizaki Y."/>
        </authorList>
    </citation>
    <scope>NUCLEOTIDE SEQUENCE [LARGE SCALE MRNA]</scope>
    <source>
        <strain>C57BL/6J</strain>
        <tissue>Bone marrow</tissue>
        <tissue>Liver</tissue>
        <tissue>Small intestine</tissue>
    </source>
</reference>
<reference key="3">
    <citation type="journal article" date="2004" name="Genome Res.">
        <title>The status, quality, and expansion of the NIH full-length cDNA project: the Mammalian Gene Collection (MGC).</title>
        <authorList>
            <consortium name="The MGC Project Team"/>
        </authorList>
    </citation>
    <scope>NUCLEOTIDE SEQUENCE [LARGE SCALE MRNA]</scope>
</reference>
<reference key="4">
    <citation type="journal article" date="2005" name="J. Biol. Chem.">
        <title>Identification of dicarboxylate carrier Slc25a10 as malate transporter in de novo fatty acid synthesis.</title>
        <authorList>
            <person name="Mizuarai S."/>
            <person name="Miki S."/>
            <person name="Araki H."/>
            <person name="Takahashi K."/>
            <person name="Kotani H."/>
        </authorList>
    </citation>
    <scope>FUNCTION</scope>
</reference>
<reference key="5">
    <citation type="journal article" date="2010" name="Cell">
        <title>A tissue-specific atlas of mouse protein phosphorylation and expression.</title>
        <authorList>
            <person name="Huttlin E.L."/>
            <person name="Jedrychowski M.P."/>
            <person name="Elias J.E."/>
            <person name="Goswami T."/>
            <person name="Rad R."/>
            <person name="Beausoleil S.A."/>
            <person name="Villen J."/>
            <person name="Haas W."/>
            <person name="Sowa M.E."/>
            <person name="Gygi S.P."/>
        </authorList>
    </citation>
    <scope>IDENTIFICATION BY MASS SPECTROMETRY [LARGE SCALE ANALYSIS]</scope>
    <source>
        <tissue>Brain</tissue>
        <tissue>Brown adipose tissue</tissue>
        <tissue>Heart</tissue>
        <tissue>Kidney</tissue>
        <tissue>Liver</tissue>
        <tissue>Lung</tissue>
        <tissue>Pancreas</tissue>
        <tissue>Spleen</tissue>
        <tissue>Testis</tissue>
    </source>
</reference>
<reference key="6">
    <citation type="journal article" date="2013" name="Proc. Natl. Acad. Sci. U.S.A.">
        <title>Label-free quantitative proteomics of the lysine acetylome in mitochondria identifies substrates of SIRT3 in metabolic pathways.</title>
        <authorList>
            <person name="Rardin M.J."/>
            <person name="Newman J.C."/>
            <person name="Held J.M."/>
            <person name="Cusack M.P."/>
            <person name="Sorensen D.J."/>
            <person name="Li B."/>
            <person name="Schilling B."/>
            <person name="Mooney S.D."/>
            <person name="Kahn C.R."/>
            <person name="Verdin E."/>
            <person name="Gibson B.W."/>
        </authorList>
    </citation>
    <scope>ACETYLATION [LARGE SCALE ANALYSIS] AT LYS-158</scope>
    <scope>IDENTIFICATION BY MASS SPECTROMETRY [LARGE SCALE ANALYSIS]</scope>
    <source>
        <tissue>Liver</tissue>
    </source>
</reference>
<reference key="7">
    <citation type="journal article" date="2019" name="Biochim. Biophys. Acta">
        <title>The circadian protein CLOCK regulates cell metabolism via the mitochondrial carrier SLC25A10.</title>
        <authorList>
            <person name="Cai T."/>
            <person name="Hua B."/>
            <person name="Luo D."/>
            <person name="Xu L."/>
            <person name="Cheng Q."/>
            <person name="Yuan G."/>
            <person name="Yan Z."/>
            <person name="Sun N."/>
            <person name="Hua L."/>
            <person name="Lu C."/>
        </authorList>
    </citation>
    <scope>FUNCTION</scope>
    <scope>ACTIVITY REGULATION</scope>
</reference>
<reference key="8">
    <citation type="journal article" date="2021" name="J. Hepatol.">
        <title>The mitochondrial dicarboxylate carrier prevents hepatic lipotoxicity by inhibiting white adipocyte lipolysis.</title>
        <authorList>
            <person name="An Y.A."/>
            <person name="Chen S."/>
            <person name="Deng Y."/>
            <person name="Wang Z.V."/>
            <person name="Funcke J.B."/>
            <person name="Shah M."/>
            <person name="Shan B."/>
            <person name="Gordillo R."/>
            <person name="Yoshino J."/>
            <person name="Klein S."/>
            <person name="Kusminski C.M."/>
            <person name="Scherer P.E."/>
        </authorList>
    </citation>
    <scope>FUNCTION</scope>
    <scope>TRANSPORT ACTIVITY</scope>
    <scope>TISSUE SPECIFICITY</scope>
</reference>
<sequence length="287" mass="31715">MAEARASRWYFGGLASCGAACCTHPLDLLKVHLQTQQEVKLRMTGMALQVVRTDGFLALYNGLSASLCRQMTYSLTRFAIYETMRDYMTKDSQGPLPFYNKVLLGGISGLTGGFVGTPADLVNVRMQNDMKLPPSQRRNYSHALDGLYRVAREESLRKLFSGATMASSRGALVTVGQLSCYDQAKQLVLSTGYLSDNIFTHFVSSFIAGGCATFLCQPLDVLKTRLMNSKGEYQGVFHCAMETAKLGPQAFFKGLFPAGIRLIPHTVLTFMFLEQLRKHFGIKVPTT</sequence>
<protein>
    <recommendedName>
        <fullName evidence="7">Mitochondrial dicarboxylate carrier</fullName>
        <shortName>DIC</shortName>
    </recommendedName>
    <alternativeName>
        <fullName>Solute carrier family 25 member 10</fullName>
    </alternativeName>
</protein>